<feature type="chain" id="PRO_0000192258" description="Ribosomal protein L11 methyltransferase">
    <location>
        <begin position="1"/>
        <end position="293"/>
    </location>
</feature>
<feature type="binding site" evidence="1">
    <location>
        <position position="145"/>
    </location>
    <ligand>
        <name>S-adenosyl-L-methionine</name>
        <dbReference type="ChEBI" id="CHEBI:59789"/>
    </ligand>
</feature>
<feature type="binding site" evidence="1">
    <location>
        <position position="166"/>
    </location>
    <ligand>
        <name>S-adenosyl-L-methionine</name>
        <dbReference type="ChEBI" id="CHEBI:59789"/>
    </ligand>
</feature>
<feature type="binding site" evidence="1">
    <location>
        <position position="188"/>
    </location>
    <ligand>
        <name>S-adenosyl-L-methionine</name>
        <dbReference type="ChEBI" id="CHEBI:59789"/>
    </ligand>
</feature>
<feature type="binding site" evidence="1">
    <location>
        <position position="230"/>
    </location>
    <ligand>
        <name>S-adenosyl-L-methionine</name>
        <dbReference type="ChEBI" id="CHEBI:59789"/>
    </ligand>
</feature>
<evidence type="ECO:0000255" key="1">
    <source>
        <dbReference type="HAMAP-Rule" id="MF_00735"/>
    </source>
</evidence>
<evidence type="ECO:0000305" key="2"/>
<gene>
    <name evidence="1" type="primary">prmA</name>
    <name type="ordered locus">c4024</name>
</gene>
<sequence length="293" mass="31877">MPWIQLKLNTTGANAEDLSDALMEAGAVSITFQDTHDTPVFEPLPGETRLWGDTDVIGLFDAETDMNDVVAILENHPLLGAGFAHKIEQLEDKDWEREWMDNFHPMRFGERLWICPSWRDVPDENAVNVMLDPGLAFGTGTHPTTSLCLQWLDSLDLTGKTVIDFGCGSGILAIAALKLGAAKAIGIDIDPQAIQASRDNAERNGVSDRLELYLPKDQPEEMKADVVVANILAGPLRELAPLISVLPVSGGLLGLSGILASQAESVCEAYADSFALDPVVEKEEWCRITGRKN</sequence>
<dbReference type="EC" id="2.1.1.-" evidence="1"/>
<dbReference type="EMBL" id="AE014075">
    <property type="protein sequence ID" value="AAN82464.1"/>
    <property type="molecule type" value="Genomic_DNA"/>
</dbReference>
<dbReference type="RefSeq" id="WP_001145827.1">
    <property type="nucleotide sequence ID" value="NZ_CP051263.1"/>
</dbReference>
<dbReference type="SMR" id="P0A8T2"/>
<dbReference type="STRING" id="199310.c4024"/>
<dbReference type="GeneID" id="75206107"/>
<dbReference type="KEGG" id="ecc:c4024"/>
<dbReference type="eggNOG" id="COG2264">
    <property type="taxonomic scope" value="Bacteria"/>
</dbReference>
<dbReference type="HOGENOM" id="CLU_049382_4_1_6"/>
<dbReference type="BioCyc" id="ECOL199310:C4024-MONOMER"/>
<dbReference type="Proteomes" id="UP000001410">
    <property type="component" value="Chromosome"/>
</dbReference>
<dbReference type="GO" id="GO:0005829">
    <property type="term" value="C:cytosol"/>
    <property type="evidence" value="ECO:0007669"/>
    <property type="project" value="TreeGrafter"/>
</dbReference>
<dbReference type="GO" id="GO:0016279">
    <property type="term" value="F:protein-lysine N-methyltransferase activity"/>
    <property type="evidence" value="ECO:0007669"/>
    <property type="project" value="TreeGrafter"/>
</dbReference>
<dbReference type="GO" id="GO:0032259">
    <property type="term" value="P:methylation"/>
    <property type="evidence" value="ECO:0007669"/>
    <property type="project" value="UniProtKB-KW"/>
</dbReference>
<dbReference type="CDD" id="cd02440">
    <property type="entry name" value="AdoMet_MTases"/>
    <property type="match status" value="1"/>
</dbReference>
<dbReference type="FunFam" id="3.40.50.150:FF:000021">
    <property type="entry name" value="Ribosomal protein L11 methyltransferase"/>
    <property type="match status" value="1"/>
</dbReference>
<dbReference type="Gene3D" id="3.40.50.150">
    <property type="entry name" value="Vaccinia Virus protein VP39"/>
    <property type="match status" value="1"/>
</dbReference>
<dbReference type="HAMAP" id="MF_00735">
    <property type="entry name" value="Methyltr_PrmA"/>
    <property type="match status" value="1"/>
</dbReference>
<dbReference type="InterPro" id="IPR050078">
    <property type="entry name" value="Ribosomal_L11_MeTrfase_PrmA"/>
</dbReference>
<dbReference type="InterPro" id="IPR004498">
    <property type="entry name" value="Ribosomal_PrmA_MeTrfase"/>
</dbReference>
<dbReference type="InterPro" id="IPR029063">
    <property type="entry name" value="SAM-dependent_MTases_sf"/>
</dbReference>
<dbReference type="NCBIfam" id="TIGR00406">
    <property type="entry name" value="prmA"/>
    <property type="match status" value="1"/>
</dbReference>
<dbReference type="PANTHER" id="PTHR43648">
    <property type="entry name" value="ELECTRON TRANSFER FLAVOPROTEIN BETA SUBUNIT LYSINE METHYLTRANSFERASE"/>
    <property type="match status" value="1"/>
</dbReference>
<dbReference type="PANTHER" id="PTHR43648:SF1">
    <property type="entry name" value="ELECTRON TRANSFER FLAVOPROTEIN BETA SUBUNIT LYSINE METHYLTRANSFERASE"/>
    <property type="match status" value="1"/>
</dbReference>
<dbReference type="Pfam" id="PF06325">
    <property type="entry name" value="PrmA"/>
    <property type="match status" value="1"/>
</dbReference>
<dbReference type="PIRSF" id="PIRSF000401">
    <property type="entry name" value="RPL11_MTase"/>
    <property type="match status" value="1"/>
</dbReference>
<dbReference type="SUPFAM" id="SSF53335">
    <property type="entry name" value="S-adenosyl-L-methionine-dependent methyltransferases"/>
    <property type="match status" value="1"/>
</dbReference>
<comment type="function">
    <text evidence="1">Methylates ribosomal protein L11.</text>
</comment>
<comment type="catalytic activity">
    <reaction evidence="1">
        <text>L-lysyl-[protein] + 3 S-adenosyl-L-methionine = N(6),N(6),N(6)-trimethyl-L-lysyl-[protein] + 3 S-adenosyl-L-homocysteine + 3 H(+)</text>
        <dbReference type="Rhea" id="RHEA:54192"/>
        <dbReference type="Rhea" id="RHEA-COMP:9752"/>
        <dbReference type="Rhea" id="RHEA-COMP:13826"/>
        <dbReference type="ChEBI" id="CHEBI:15378"/>
        <dbReference type="ChEBI" id="CHEBI:29969"/>
        <dbReference type="ChEBI" id="CHEBI:57856"/>
        <dbReference type="ChEBI" id="CHEBI:59789"/>
        <dbReference type="ChEBI" id="CHEBI:61961"/>
    </reaction>
</comment>
<comment type="subcellular location">
    <subcellularLocation>
        <location evidence="1">Cytoplasm</location>
    </subcellularLocation>
</comment>
<comment type="similarity">
    <text evidence="1 2">Belongs to the methyltransferase superfamily. PrmA family.</text>
</comment>
<protein>
    <recommendedName>
        <fullName evidence="1">Ribosomal protein L11 methyltransferase</fullName>
        <shortName evidence="1">L11 Mtase</shortName>
        <ecNumber evidence="1">2.1.1.-</ecNumber>
    </recommendedName>
</protein>
<name>PRMA_ECOL6</name>
<keyword id="KW-0963">Cytoplasm</keyword>
<keyword id="KW-0489">Methyltransferase</keyword>
<keyword id="KW-1185">Reference proteome</keyword>
<keyword id="KW-0949">S-adenosyl-L-methionine</keyword>
<keyword id="KW-0808">Transferase</keyword>
<proteinExistence type="inferred from homology"/>
<organism>
    <name type="scientific">Escherichia coli O6:H1 (strain CFT073 / ATCC 700928 / UPEC)</name>
    <dbReference type="NCBI Taxonomy" id="199310"/>
    <lineage>
        <taxon>Bacteria</taxon>
        <taxon>Pseudomonadati</taxon>
        <taxon>Pseudomonadota</taxon>
        <taxon>Gammaproteobacteria</taxon>
        <taxon>Enterobacterales</taxon>
        <taxon>Enterobacteriaceae</taxon>
        <taxon>Escherichia</taxon>
    </lineage>
</organism>
<reference key="1">
    <citation type="journal article" date="2002" name="Proc. Natl. Acad. Sci. U.S.A.">
        <title>Extensive mosaic structure revealed by the complete genome sequence of uropathogenic Escherichia coli.</title>
        <authorList>
            <person name="Welch R.A."/>
            <person name="Burland V."/>
            <person name="Plunkett G. III"/>
            <person name="Redford P."/>
            <person name="Roesch P."/>
            <person name="Rasko D."/>
            <person name="Buckles E.L."/>
            <person name="Liou S.-R."/>
            <person name="Boutin A."/>
            <person name="Hackett J."/>
            <person name="Stroud D."/>
            <person name="Mayhew G.F."/>
            <person name="Rose D.J."/>
            <person name="Zhou S."/>
            <person name="Schwartz D.C."/>
            <person name="Perna N.T."/>
            <person name="Mobley H.L.T."/>
            <person name="Donnenberg M.S."/>
            <person name="Blattner F.R."/>
        </authorList>
    </citation>
    <scope>NUCLEOTIDE SEQUENCE [LARGE SCALE GENOMIC DNA]</scope>
    <source>
        <strain>CFT073 / ATCC 700928 / UPEC</strain>
    </source>
</reference>
<accession>P0A8T2</accession>
<accession>P28637</accession>
<accession>P76680</accession>
<accession>P76681</accession>